<name>T64_TERSU</name>
<evidence type="ECO:0000255" key="1"/>
<evidence type="ECO:0000303" key="2">
    <source>
    </source>
</evidence>
<evidence type="ECO:0000305" key="3"/>
<evidence type="ECO:0000305" key="4">
    <source>
    </source>
</evidence>
<feature type="signal peptide" evidence="1">
    <location>
        <begin position="1"/>
        <end position="21"/>
    </location>
</feature>
<feature type="propeptide" id="PRO_0000435072" evidence="3">
    <location>
        <begin position="22"/>
        <end position="53"/>
    </location>
</feature>
<feature type="chain" id="PRO_0000435073" description="Teretoxin Tsu6.4">
    <location>
        <begin position="54"/>
        <end position="99"/>
    </location>
</feature>
<organism>
    <name type="scientific">Terebra subulata</name>
    <name type="common">Chocolate spotted auger</name>
    <name type="synonym">Buccinum subulatum</name>
    <dbReference type="NCBI Taxonomy" id="89435"/>
    <lineage>
        <taxon>Eukaryota</taxon>
        <taxon>Metazoa</taxon>
        <taxon>Spiralia</taxon>
        <taxon>Lophotrochozoa</taxon>
        <taxon>Mollusca</taxon>
        <taxon>Gastropoda</taxon>
        <taxon>Caenogastropoda</taxon>
        <taxon>Neogastropoda</taxon>
        <taxon>Conoidea</taxon>
        <taxon>Terebridae</taxon>
        <taxon>Terebra</taxon>
    </lineage>
</organism>
<keyword id="KW-0165">Cleavage on pair of basic residues</keyword>
<keyword id="KW-1015">Disulfide bond</keyword>
<keyword id="KW-0964">Secreted</keyword>
<keyword id="KW-0732">Signal</keyword>
<keyword id="KW-0800">Toxin</keyword>
<dbReference type="GO" id="GO:0005576">
    <property type="term" value="C:extracellular region"/>
    <property type="evidence" value="ECO:0007669"/>
    <property type="project" value="UniProtKB-SubCell"/>
</dbReference>
<dbReference type="GO" id="GO:0090729">
    <property type="term" value="F:toxin activity"/>
    <property type="evidence" value="ECO:0007669"/>
    <property type="project" value="UniProtKB-KW"/>
</dbReference>
<reference key="1">
    <citation type="journal article" date="2015" name="Genome Biol. Evol.">
        <title>Molecular diversity and gene evolution of the venom arsenal of Terebridae predatory marine snails.</title>
        <authorList>
            <person name="Gorson J."/>
            <person name="Ramrattan G."/>
            <person name="Verdes A."/>
            <person name="Wright E.M."/>
            <person name="Kantor Y."/>
            <person name="Rajaram Srinivasan R."/>
            <person name="Musunuri R."/>
            <person name="Packer D."/>
            <person name="Albano G."/>
            <person name="Qiu W.G."/>
            <person name="Holford M."/>
        </authorList>
    </citation>
    <scope>NUCLEOTIDE SEQUENCE [MRNA]</scope>
    <source>
        <tissue>Venom duct</tissue>
    </source>
</reference>
<sequence>MRLLLILVLLTPVIVAFSVDEELNNADGANAASFTADQEVRHKRNLFPAIARRGLDVELKSDGCPKYCPPGISCCFGDNCATSATSGKMECLKNPRQFV</sequence>
<comment type="subcellular location">
    <subcellularLocation>
        <location evidence="4">Secreted</location>
    </subcellularLocation>
</comment>
<comment type="tissue specificity">
    <text evidence="4">Expressed by the venom duct.</text>
</comment>
<comment type="domain">
    <text evidence="3">The cysteine framework is VI/VII (C-C-CC-C-C). Has the PXY motif between the first and the second Cys residues.</text>
</comment>
<comment type="PTM">
    <text evidence="3">Contains 3 disulfide bonds.</text>
</comment>
<accession>P0DN53</accession>
<protein>
    <recommendedName>
        <fullName evidence="2">Teretoxin Tsu6.4</fullName>
    </recommendedName>
</protein>
<proteinExistence type="inferred from homology"/>